<organism>
    <name type="scientific">Pongo abelii</name>
    <name type="common">Sumatran orangutan</name>
    <name type="synonym">Pongo pygmaeus abelii</name>
    <dbReference type="NCBI Taxonomy" id="9601"/>
    <lineage>
        <taxon>Eukaryota</taxon>
        <taxon>Metazoa</taxon>
        <taxon>Chordata</taxon>
        <taxon>Craniata</taxon>
        <taxon>Vertebrata</taxon>
        <taxon>Euteleostomi</taxon>
        <taxon>Mammalia</taxon>
        <taxon>Eutheria</taxon>
        <taxon>Euarchontoglires</taxon>
        <taxon>Primates</taxon>
        <taxon>Haplorrhini</taxon>
        <taxon>Catarrhini</taxon>
        <taxon>Hominidae</taxon>
        <taxon>Pongo</taxon>
    </lineage>
</organism>
<protein>
    <recommendedName>
        <fullName>Visinin-like protein 1</fullName>
        <shortName>VILIP</shortName>
    </recommendedName>
</protein>
<feature type="initiator methionine" description="Removed">
    <location>
        <position position="1"/>
    </location>
</feature>
<feature type="chain" id="PRO_0000269887" description="Visinin-like protein 1">
    <location>
        <begin position="2"/>
        <end position="191"/>
    </location>
</feature>
<feature type="domain" description="EF-hand 1" evidence="2">
    <location>
        <begin position="40"/>
        <end position="58"/>
    </location>
</feature>
<feature type="domain" description="EF-hand 2" evidence="2">
    <location>
        <begin position="60"/>
        <end position="95"/>
    </location>
</feature>
<feature type="domain" description="EF-hand 3" evidence="2">
    <location>
        <begin position="96"/>
        <end position="131"/>
    </location>
</feature>
<feature type="domain" description="EF-hand 4" evidence="2">
    <location>
        <begin position="146"/>
        <end position="181"/>
    </location>
</feature>
<feature type="binding site" evidence="2">
    <location>
        <position position="73"/>
    </location>
    <ligand>
        <name>Ca(2+)</name>
        <dbReference type="ChEBI" id="CHEBI:29108"/>
        <label>1</label>
    </ligand>
</feature>
<feature type="binding site" evidence="2">
    <location>
        <position position="75"/>
    </location>
    <ligand>
        <name>Ca(2+)</name>
        <dbReference type="ChEBI" id="CHEBI:29108"/>
        <label>1</label>
    </ligand>
</feature>
<feature type="binding site" evidence="2">
    <location>
        <position position="77"/>
    </location>
    <ligand>
        <name>Ca(2+)</name>
        <dbReference type="ChEBI" id="CHEBI:29108"/>
        <label>1</label>
    </ligand>
</feature>
<feature type="binding site" evidence="2">
    <location>
        <position position="79"/>
    </location>
    <ligand>
        <name>Ca(2+)</name>
        <dbReference type="ChEBI" id="CHEBI:29108"/>
        <label>1</label>
    </ligand>
</feature>
<feature type="binding site" evidence="2">
    <location>
        <position position="84"/>
    </location>
    <ligand>
        <name>Ca(2+)</name>
        <dbReference type="ChEBI" id="CHEBI:29108"/>
        <label>1</label>
    </ligand>
</feature>
<feature type="binding site" evidence="2">
    <location>
        <position position="109"/>
    </location>
    <ligand>
        <name>Ca(2+)</name>
        <dbReference type="ChEBI" id="CHEBI:29108"/>
        <label>2</label>
    </ligand>
</feature>
<feature type="binding site" evidence="2">
    <location>
        <position position="111"/>
    </location>
    <ligand>
        <name>Ca(2+)</name>
        <dbReference type="ChEBI" id="CHEBI:29108"/>
        <label>2</label>
    </ligand>
</feature>
<feature type="binding site" evidence="2">
    <location>
        <position position="113"/>
    </location>
    <ligand>
        <name>Ca(2+)</name>
        <dbReference type="ChEBI" id="CHEBI:29108"/>
        <label>2</label>
    </ligand>
</feature>
<feature type="binding site" evidence="2">
    <location>
        <position position="115"/>
    </location>
    <ligand>
        <name>Ca(2+)</name>
        <dbReference type="ChEBI" id="CHEBI:29108"/>
        <label>2</label>
    </ligand>
</feature>
<feature type="binding site" evidence="2">
    <location>
        <position position="120"/>
    </location>
    <ligand>
        <name>Ca(2+)</name>
        <dbReference type="ChEBI" id="CHEBI:29108"/>
        <label>2</label>
    </ligand>
</feature>
<feature type="binding site" evidence="2">
    <location>
        <position position="159"/>
    </location>
    <ligand>
        <name>Ca(2+)</name>
        <dbReference type="ChEBI" id="CHEBI:29108"/>
        <label>3</label>
    </ligand>
</feature>
<feature type="binding site" evidence="2">
    <location>
        <position position="161"/>
    </location>
    <ligand>
        <name>Ca(2+)</name>
        <dbReference type="ChEBI" id="CHEBI:29108"/>
        <label>3</label>
    </ligand>
</feature>
<feature type="binding site" evidence="2">
    <location>
        <position position="163"/>
    </location>
    <ligand>
        <name>Ca(2+)</name>
        <dbReference type="ChEBI" id="CHEBI:29108"/>
        <label>3</label>
    </ligand>
</feature>
<feature type="binding site" evidence="2">
    <location>
        <position position="165"/>
    </location>
    <ligand>
        <name>Ca(2+)</name>
        <dbReference type="ChEBI" id="CHEBI:29108"/>
        <label>3</label>
    </ligand>
</feature>
<feature type="binding site" evidence="2">
    <location>
        <position position="170"/>
    </location>
    <ligand>
        <name>Ca(2+)</name>
        <dbReference type="ChEBI" id="CHEBI:29108"/>
        <label>3</label>
    </ligand>
</feature>
<feature type="lipid moiety-binding region" description="N-myristoyl glycine" evidence="1">
    <location>
        <position position="2"/>
    </location>
</feature>
<feature type="sequence conflict" description="In Ref. 1; CAH92467." evidence="3" ref="1">
    <original>D</original>
    <variation>G</variation>
    <location>
        <position position="109"/>
    </location>
</feature>
<comment type="function">
    <text evidence="1">Regulates (in vitro) the inhibition of rhodopsin phosphorylation in a calcium-dependent manner.</text>
</comment>
<comment type="miscellaneous">
    <text evidence="1">Probably binds three calcium ions.</text>
</comment>
<comment type="similarity">
    <text evidence="3">Belongs to the recoverin family.</text>
</comment>
<proteinExistence type="evidence at transcript level"/>
<dbReference type="EMBL" id="CR858096">
    <property type="protein sequence ID" value="CAH90335.1"/>
    <property type="molecule type" value="mRNA"/>
</dbReference>
<dbReference type="EMBL" id="CR860330">
    <property type="protein sequence ID" value="CAH92467.1"/>
    <property type="molecule type" value="mRNA"/>
</dbReference>
<dbReference type="RefSeq" id="NP_001126454.1">
    <property type="nucleotide sequence ID" value="NM_001132982.1"/>
</dbReference>
<dbReference type="RefSeq" id="XP_054402118.1">
    <property type="nucleotide sequence ID" value="XM_054546143.2"/>
</dbReference>
<dbReference type="SMR" id="Q5RD22"/>
<dbReference type="FunCoup" id="Q5RD22">
    <property type="interactions" value="176"/>
</dbReference>
<dbReference type="STRING" id="9601.ENSPPYP00000023634"/>
<dbReference type="Ensembl" id="ENSPPYT00000014673.2">
    <property type="protein sequence ID" value="ENSPPYP00000014102.1"/>
    <property type="gene ID" value="ENSPPYG00000012631.3"/>
</dbReference>
<dbReference type="GeneID" id="100173440"/>
<dbReference type="KEGG" id="pon:100173440"/>
<dbReference type="CTD" id="7447"/>
<dbReference type="eggNOG" id="KOG0044">
    <property type="taxonomic scope" value="Eukaryota"/>
</dbReference>
<dbReference type="GeneTree" id="ENSGT00940000156513"/>
<dbReference type="HOGENOM" id="CLU_072366_1_0_1"/>
<dbReference type="InParanoid" id="Q5RD22"/>
<dbReference type="OMA" id="HISRREM"/>
<dbReference type="OrthoDB" id="191686at2759"/>
<dbReference type="TreeFam" id="TF300009"/>
<dbReference type="Proteomes" id="UP000001595">
    <property type="component" value="Chromosome 2A"/>
</dbReference>
<dbReference type="GO" id="GO:0005829">
    <property type="term" value="C:cytosol"/>
    <property type="evidence" value="ECO:0007669"/>
    <property type="project" value="Ensembl"/>
</dbReference>
<dbReference type="GO" id="GO:0016020">
    <property type="term" value="C:membrane"/>
    <property type="evidence" value="ECO:0007669"/>
    <property type="project" value="Ensembl"/>
</dbReference>
<dbReference type="GO" id="GO:0005509">
    <property type="term" value="F:calcium ion binding"/>
    <property type="evidence" value="ECO:0007669"/>
    <property type="project" value="InterPro"/>
</dbReference>
<dbReference type="GO" id="GO:0046676">
    <property type="term" value="P:negative regulation of insulin secretion"/>
    <property type="evidence" value="ECO:0007669"/>
    <property type="project" value="Ensembl"/>
</dbReference>
<dbReference type="GO" id="GO:0045921">
    <property type="term" value="P:positive regulation of exocytosis"/>
    <property type="evidence" value="ECO:0007669"/>
    <property type="project" value="Ensembl"/>
</dbReference>
<dbReference type="GO" id="GO:0035774">
    <property type="term" value="P:positive regulation of insulin secretion involved in cellular response to glucose stimulus"/>
    <property type="evidence" value="ECO:0007669"/>
    <property type="project" value="Ensembl"/>
</dbReference>
<dbReference type="CDD" id="cd00051">
    <property type="entry name" value="EFh"/>
    <property type="match status" value="2"/>
</dbReference>
<dbReference type="FunFam" id="1.10.238.10:FF:000009">
    <property type="entry name" value="Visinin-like protein 1"/>
    <property type="match status" value="1"/>
</dbReference>
<dbReference type="Gene3D" id="1.10.238.10">
    <property type="entry name" value="EF-hand"/>
    <property type="match status" value="1"/>
</dbReference>
<dbReference type="InterPro" id="IPR011992">
    <property type="entry name" value="EF-hand-dom_pair"/>
</dbReference>
<dbReference type="InterPro" id="IPR018247">
    <property type="entry name" value="EF_Hand_1_Ca_BS"/>
</dbReference>
<dbReference type="InterPro" id="IPR002048">
    <property type="entry name" value="EF_hand_dom"/>
</dbReference>
<dbReference type="InterPro" id="IPR028846">
    <property type="entry name" value="Recoverin"/>
</dbReference>
<dbReference type="PANTHER" id="PTHR23055">
    <property type="entry name" value="CALCIUM BINDING PROTEINS"/>
    <property type="match status" value="1"/>
</dbReference>
<dbReference type="PANTHER" id="PTHR23055:SF101">
    <property type="entry name" value="VISININ-LIKE PROTEIN 1"/>
    <property type="match status" value="1"/>
</dbReference>
<dbReference type="Pfam" id="PF00036">
    <property type="entry name" value="EF-hand_1"/>
    <property type="match status" value="1"/>
</dbReference>
<dbReference type="Pfam" id="PF13499">
    <property type="entry name" value="EF-hand_7"/>
    <property type="match status" value="1"/>
</dbReference>
<dbReference type="PRINTS" id="PR00450">
    <property type="entry name" value="RECOVERIN"/>
</dbReference>
<dbReference type="SMART" id="SM00054">
    <property type="entry name" value="EFh"/>
    <property type="match status" value="3"/>
</dbReference>
<dbReference type="SUPFAM" id="SSF47473">
    <property type="entry name" value="EF-hand"/>
    <property type="match status" value="1"/>
</dbReference>
<dbReference type="PROSITE" id="PS00018">
    <property type="entry name" value="EF_HAND_1"/>
    <property type="match status" value="3"/>
</dbReference>
<dbReference type="PROSITE" id="PS50222">
    <property type="entry name" value="EF_HAND_2"/>
    <property type="match status" value="4"/>
</dbReference>
<keyword id="KW-0106">Calcium</keyword>
<keyword id="KW-0449">Lipoprotein</keyword>
<keyword id="KW-0479">Metal-binding</keyword>
<keyword id="KW-0519">Myristate</keyword>
<keyword id="KW-1185">Reference proteome</keyword>
<keyword id="KW-0677">Repeat</keyword>
<gene>
    <name type="primary">VSNL1</name>
</gene>
<evidence type="ECO:0000250" key="1"/>
<evidence type="ECO:0000255" key="2">
    <source>
        <dbReference type="PROSITE-ProRule" id="PRU00448"/>
    </source>
</evidence>
<evidence type="ECO:0000305" key="3"/>
<name>VISL1_PONAB</name>
<sequence>MGKQNSKLAPEVMEDLVKSTEFNEHELKQWYKGFLKDCPSGRLNLEEFQQLYVKFFPYGDASKFAQHAFRTFDKNGDGTIDFREFICALSITSRGSFEQKLNWAFNMYDLDGDGKITRVEMLEIIEAIYKMVGTVIMMKMNEDGLTPEQRVDKIFSKMDKNKDDQITLDEFKEAAKSDPSIVLLLQCDIQK</sequence>
<reference key="1">
    <citation type="submission" date="2004-11" db="EMBL/GenBank/DDBJ databases">
        <authorList>
            <consortium name="The German cDNA consortium"/>
        </authorList>
    </citation>
    <scope>NUCLEOTIDE SEQUENCE [LARGE SCALE MRNA]</scope>
    <source>
        <tissue>Brain cortex</tissue>
    </source>
</reference>
<accession>Q5RD22</accession>
<accession>Q5R6Z3</accession>